<accession>A8MQR0</accession>
<accession>Q9CAB0</accession>
<gene>
    <name type="primary">WIT2</name>
    <name type="ordered locus">At1g68910</name>
    <name type="ORF">T6L1.9</name>
</gene>
<protein>
    <recommendedName>
        <fullName>WPP domain-interacting tail-anchored protein 2</fullName>
    </recommendedName>
</protein>
<feature type="chain" id="PRO_0000347195" description="WPP domain-interacting tail-anchored protein 2">
    <location>
        <begin position="1"/>
        <end position="627"/>
    </location>
</feature>
<feature type="transmembrane region" description="Helical" evidence="2">
    <location>
        <begin position="606"/>
        <end position="626"/>
    </location>
</feature>
<feature type="region of interest" description="Disordered" evidence="3">
    <location>
        <begin position="577"/>
        <end position="597"/>
    </location>
</feature>
<feature type="coiled-coil region" evidence="2">
    <location>
        <begin position="81"/>
        <end position="152"/>
    </location>
</feature>
<feature type="coiled-coil region" evidence="2">
    <location>
        <begin position="188"/>
        <end position="218"/>
    </location>
</feature>
<feature type="coiled-coil region" evidence="2">
    <location>
        <begin position="312"/>
        <end position="542"/>
    </location>
</feature>
<feature type="compositionally biased region" description="Basic and acidic residues" evidence="3">
    <location>
        <begin position="580"/>
        <end position="597"/>
    </location>
</feature>
<feature type="splice variant" id="VSP_035069" description="In isoform 2." evidence="7">
    <original>EDE</original>
    <variation>AGG</variation>
    <location>
        <begin position="580"/>
        <end position="582"/>
    </location>
</feature>
<feature type="splice variant" id="VSP_035070" description="In isoform 2." evidence="7">
    <location>
        <begin position="583"/>
        <end position="627"/>
    </location>
</feature>
<sequence>MEEIIREDYFEALSSRNEEEQEMLRMLTKLEIDSAYTSEKLMNLHVLLMHLLAWDNDLEGMGTLDSSPASFEKALTFDLLCGILESEVKEVDEVLDVLEAQIVDTSYKISSCKHGNYIVIEGKLGESAESLKQSRGQVSEITLQLAQLRRTLHYIRNGTSENEESVELRQKYALKPSDLRHKNALRMLEKSLSRELELEKKLMEFQQNEEQLKLKLHYTEEVSSRMEEASEFIWGRFLEADNSSEVLTGISKELVGRLQILQFSLNGSAQRESELKSKLEDCTVQLEAKDLLVQKLEGTISENSEIVSEVLTLREYVKSAEQKLKNTDLELKSVNASKQEILVHLAEMENANESVKENLFEAESRAESGEAKIKELDAANLELTEELNFLKDADDKKTKKVNSLEKQVRELEVQVQNSKVSSEANQEQQNMLYSAIWDMETLIEDLKSKASKAESRTETVEEQCIVLSTTNSELNKDVSFLRQKAKSLEAMLDLANNEKERYAQEITTRNKVLMDMMLQLSSERERIQEQLYSLAKENKILRVNQCSNTYQRNGSYAGDKELSFHADGHEIEALAESLQEDERTREEPEKQSVSEKSSEIRRAIKLKHILVVALVFVLFCSFFGVTY</sequence>
<dbReference type="EMBL" id="AC011665">
    <property type="protein sequence ID" value="AAG51595.1"/>
    <property type="status" value="ALT_SEQ"/>
    <property type="molecule type" value="Genomic_DNA"/>
</dbReference>
<dbReference type="EMBL" id="CP002684">
    <property type="protein sequence ID" value="AEE34858.1"/>
    <property type="molecule type" value="Genomic_DNA"/>
</dbReference>
<dbReference type="EMBL" id="CP002684">
    <property type="protein sequence ID" value="AEE34859.1"/>
    <property type="molecule type" value="Genomic_DNA"/>
</dbReference>
<dbReference type="EMBL" id="CP002684">
    <property type="protein sequence ID" value="AEE34860.1"/>
    <property type="molecule type" value="Genomic_DNA"/>
</dbReference>
<dbReference type="PIR" id="F96713">
    <property type="entry name" value="F96713"/>
</dbReference>
<dbReference type="RefSeq" id="NP_001077797.1">
    <molecule id="A8MQR0-2"/>
    <property type="nucleotide sequence ID" value="NM_001084328.2"/>
</dbReference>
<dbReference type="RefSeq" id="NP_001185353.1">
    <molecule id="A8MQR0-2"/>
    <property type="nucleotide sequence ID" value="NM_001198424.2"/>
</dbReference>
<dbReference type="RefSeq" id="NP_177057.2">
    <molecule id="A8MQR0-1"/>
    <property type="nucleotide sequence ID" value="NM_105565.3"/>
</dbReference>
<dbReference type="SMR" id="A8MQR0"/>
<dbReference type="BioGRID" id="28445">
    <property type="interactions" value="6"/>
</dbReference>
<dbReference type="FunCoup" id="A8MQR0">
    <property type="interactions" value="396"/>
</dbReference>
<dbReference type="IntAct" id="A8MQR0">
    <property type="interactions" value="2"/>
</dbReference>
<dbReference type="STRING" id="3702.A8MQR0"/>
<dbReference type="iPTMnet" id="A8MQR0"/>
<dbReference type="PaxDb" id="3702-AT1G68910.1"/>
<dbReference type="ProteomicsDB" id="242465">
    <molecule id="A8MQR0-1"/>
</dbReference>
<dbReference type="EnsemblPlants" id="AT1G68910.1">
    <molecule id="A8MQR0-1"/>
    <property type="protein sequence ID" value="AT1G68910.1"/>
    <property type="gene ID" value="AT1G68910"/>
</dbReference>
<dbReference type="EnsemblPlants" id="AT1G68910.2">
    <molecule id="A8MQR0-2"/>
    <property type="protein sequence ID" value="AT1G68910.2"/>
    <property type="gene ID" value="AT1G68910"/>
</dbReference>
<dbReference type="EnsemblPlants" id="AT1G68910.3">
    <molecule id="A8MQR0-2"/>
    <property type="protein sequence ID" value="AT1G68910.3"/>
    <property type="gene ID" value="AT1G68910"/>
</dbReference>
<dbReference type="GeneID" id="843224"/>
<dbReference type="Gramene" id="AT1G68910.1">
    <molecule id="A8MQR0-1"/>
    <property type="protein sequence ID" value="AT1G68910.1"/>
    <property type="gene ID" value="AT1G68910"/>
</dbReference>
<dbReference type="Gramene" id="AT1G68910.2">
    <molecule id="A8MQR0-2"/>
    <property type="protein sequence ID" value="AT1G68910.2"/>
    <property type="gene ID" value="AT1G68910"/>
</dbReference>
<dbReference type="Gramene" id="AT1G68910.3">
    <molecule id="A8MQR0-2"/>
    <property type="protein sequence ID" value="AT1G68910.3"/>
    <property type="gene ID" value="AT1G68910"/>
</dbReference>
<dbReference type="KEGG" id="ath:AT1G68910"/>
<dbReference type="Araport" id="AT1G68910"/>
<dbReference type="TAIR" id="AT1G68910">
    <property type="gene designation" value="WIT2"/>
</dbReference>
<dbReference type="eggNOG" id="ENOG502QPXD">
    <property type="taxonomic scope" value="Eukaryota"/>
</dbReference>
<dbReference type="InParanoid" id="A8MQR0"/>
<dbReference type="OMA" id="IDNCIGQ"/>
<dbReference type="PhylomeDB" id="A8MQR0"/>
<dbReference type="PRO" id="PR:A8MQR0"/>
<dbReference type="Proteomes" id="UP000006548">
    <property type="component" value="Chromosome 1"/>
</dbReference>
<dbReference type="ExpressionAtlas" id="A8MQR0">
    <property type="expression patterns" value="baseline and differential"/>
</dbReference>
<dbReference type="GO" id="GO:0016020">
    <property type="term" value="C:membrane"/>
    <property type="evidence" value="ECO:0007669"/>
    <property type="project" value="UniProtKB-SubCell"/>
</dbReference>
<dbReference type="GO" id="GO:0080115">
    <property type="term" value="F:myosin XI tail binding"/>
    <property type="evidence" value="ECO:0000314"/>
    <property type="project" value="TAIR"/>
</dbReference>
<dbReference type="GO" id="GO:2000769">
    <property type="term" value="P:regulation of establishment or maintenance of cell polarity regulating cell shape"/>
    <property type="evidence" value="ECO:0000315"/>
    <property type="project" value="UniProtKB"/>
</dbReference>
<dbReference type="InterPro" id="IPR039976">
    <property type="entry name" value="WIT1/WIT2"/>
</dbReference>
<dbReference type="PANTHER" id="PTHR35705">
    <property type="entry name" value="WPP DOMAIN-INTERACTING TAIL-ANCHORED PROTEIN 1"/>
    <property type="match status" value="1"/>
</dbReference>
<dbReference type="PANTHER" id="PTHR35705:SF2">
    <property type="entry name" value="WPP DOMAIN-INTERACTING TAIL-ANCHORED PROTEIN 2"/>
    <property type="match status" value="1"/>
</dbReference>
<dbReference type="SUPFAM" id="SSF57997">
    <property type="entry name" value="Tropomyosin"/>
    <property type="match status" value="1"/>
</dbReference>
<comment type="function">
    <text evidence="4 6">Together with WIT1, required for the nuclear envelope docking of RANGAP proteins in root tips (PubMed:18591351). Plays a role in nuclear shape determination (PubMed:25759303). As component of the SUN-WIP-WIT2-KAKU1 complex, mediates the transfer of cytoplasmic forces to the nuclear envelope (NE), leading to nuclear shape changes (PubMed:25759303).</text>
</comment>
<comment type="subunit">
    <text evidence="1 5 6">Component of Ran complexes at least composed of WIT1 or WIT2, RANGAP1 or RANGAP2, and WIP1 or WIP2 or WIP3 (By similarity). Interacts with KAKU1 (PubMed:23973298, PubMed:25759303). Core component of the LINC complex which is composed of inner nuclear membrane SUN domain-containing proteins coupled to outer nuclear membrane WIP and WIT proteins. The LINC complex also involves nucleoskeletal proteins CRWN/LINC and possibly KAKU4 and the cytoskeletal myosin KAKU1 (PubMed:25759303). Interacts with WIP1, WIP2 and WIP3 (PubMed:25759303).</text>
</comment>
<comment type="subcellular location">
    <subcellularLocation>
        <location evidence="7">Membrane</location>
        <topology evidence="7">Single-pass membrane protein</topology>
    </subcellularLocation>
</comment>
<comment type="alternative products">
    <event type="alternative splicing"/>
    <isoform>
        <id>A8MQR0-1</id>
        <name>1</name>
        <sequence type="displayed"/>
    </isoform>
    <isoform>
        <id>A8MQR0-2</id>
        <name>2</name>
        <sequence type="described" ref="VSP_035069 VSP_035070"/>
    </isoform>
</comment>
<comment type="tissue specificity">
    <text evidence="4">Ubiquitous.</text>
</comment>
<comment type="sequence caution" evidence="7">
    <conflict type="erroneous gene model prediction">
        <sequence resource="EMBL-CDS" id="AAG51595"/>
    </conflict>
</comment>
<reference key="1">
    <citation type="journal article" date="2000" name="Nature">
        <title>Sequence and analysis of chromosome 1 of the plant Arabidopsis thaliana.</title>
        <authorList>
            <person name="Theologis A."/>
            <person name="Ecker J.R."/>
            <person name="Palm C.J."/>
            <person name="Federspiel N.A."/>
            <person name="Kaul S."/>
            <person name="White O."/>
            <person name="Alonso J."/>
            <person name="Altafi H."/>
            <person name="Araujo R."/>
            <person name="Bowman C.L."/>
            <person name="Brooks S.Y."/>
            <person name="Buehler E."/>
            <person name="Chan A."/>
            <person name="Chao Q."/>
            <person name="Chen H."/>
            <person name="Cheuk R.F."/>
            <person name="Chin C.W."/>
            <person name="Chung M.K."/>
            <person name="Conn L."/>
            <person name="Conway A.B."/>
            <person name="Conway A.R."/>
            <person name="Creasy T.H."/>
            <person name="Dewar K."/>
            <person name="Dunn P."/>
            <person name="Etgu P."/>
            <person name="Feldblyum T.V."/>
            <person name="Feng J.-D."/>
            <person name="Fong B."/>
            <person name="Fujii C.Y."/>
            <person name="Gill J.E."/>
            <person name="Goldsmith A.D."/>
            <person name="Haas B."/>
            <person name="Hansen N.F."/>
            <person name="Hughes B."/>
            <person name="Huizar L."/>
            <person name="Hunter J.L."/>
            <person name="Jenkins J."/>
            <person name="Johnson-Hopson C."/>
            <person name="Khan S."/>
            <person name="Khaykin E."/>
            <person name="Kim C.J."/>
            <person name="Koo H.L."/>
            <person name="Kremenetskaia I."/>
            <person name="Kurtz D.B."/>
            <person name="Kwan A."/>
            <person name="Lam B."/>
            <person name="Langin-Hooper S."/>
            <person name="Lee A."/>
            <person name="Lee J.M."/>
            <person name="Lenz C.A."/>
            <person name="Li J.H."/>
            <person name="Li Y.-P."/>
            <person name="Lin X."/>
            <person name="Liu S.X."/>
            <person name="Liu Z.A."/>
            <person name="Luros J.S."/>
            <person name="Maiti R."/>
            <person name="Marziali A."/>
            <person name="Militscher J."/>
            <person name="Miranda M."/>
            <person name="Nguyen M."/>
            <person name="Nierman W.C."/>
            <person name="Osborne B.I."/>
            <person name="Pai G."/>
            <person name="Peterson J."/>
            <person name="Pham P.K."/>
            <person name="Rizzo M."/>
            <person name="Rooney T."/>
            <person name="Rowley D."/>
            <person name="Sakano H."/>
            <person name="Salzberg S.L."/>
            <person name="Schwartz J.R."/>
            <person name="Shinn P."/>
            <person name="Southwick A.M."/>
            <person name="Sun H."/>
            <person name="Tallon L.J."/>
            <person name="Tambunga G."/>
            <person name="Toriumi M.J."/>
            <person name="Town C.D."/>
            <person name="Utterback T."/>
            <person name="Van Aken S."/>
            <person name="Vaysberg M."/>
            <person name="Vysotskaia V.S."/>
            <person name="Walker M."/>
            <person name="Wu D."/>
            <person name="Yu G."/>
            <person name="Fraser C.M."/>
            <person name="Venter J.C."/>
            <person name="Davis R.W."/>
        </authorList>
    </citation>
    <scope>NUCLEOTIDE SEQUENCE [LARGE SCALE GENOMIC DNA]</scope>
    <source>
        <strain>cv. Columbia</strain>
    </source>
</reference>
<reference key="2">
    <citation type="journal article" date="2017" name="Plant J.">
        <title>Araport11: a complete reannotation of the Arabidopsis thaliana reference genome.</title>
        <authorList>
            <person name="Cheng C.Y."/>
            <person name="Krishnakumar V."/>
            <person name="Chan A.P."/>
            <person name="Thibaud-Nissen F."/>
            <person name="Schobel S."/>
            <person name="Town C.D."/>
        </authorList>
    </citation>
    <scope>GENOME REANNOTATION</scope>
    <source>
        <strain>cv. Columbia</strain>
    </source>
</reference>
<reference key="3">
    <citation type="journal article" date="2008" name="Plant Cell">
        <title>Two distinct interacting classes of nuclear envelope-associated coiled-coil proteins are required for the tissue-specific nuclear envelope targeting of Arabidopsis RanGAP.</title>
        <authorList>
            <person name="Zhao Q."/>
            <person name="Brkljacic J."/>
            <person name="Meier I."/>
        </authorList>
    </citation>
    <scope>PROTEIN SEQUENCE OF 236-253 (ISOFORM 1/2)</scope>
    <scope>FUNCTION</scope>
    <scope>TISSUE SPECIFICITY</scope>
</reference>
<reference key="4">
    <citation type="journal article" date="2013" name="Curr. Biol.">
        <title>Myosin XI-i links the nuclear membrane to the cytoskeleton to control nuclear movement and shape in Arabidopsis.</title>
        <authorList>
            <person name="Tamura K."/>
            <person name="Iwabuchi K."/>
            <person name="Fukao Y."/>
            <person name="Kondo M."/>
            <person name="Okamoto K."/>
            <person name="Ueda H."/>
            <person name="Nishimura M."/>
            <person name="Hara-Nishimura I."/>
        </authorList>
    </citation>
    <scope>INTERACTION WITH KAKU1</scope>
</reference>
<reference key="5">
    <citation type="journal article" date="2015" name="J. Exp. Bot.">
        <title>The plant nuclear envelope as a multifunctional platform LINCed by SUN and KASH.</title>
        <authorList>
            <person name="Zhou X."/>
            <person name="Graumann K."/>
            <person name="Meier I."/>
        </authorList>
    </citation>
    <scope>REVIEW</scope>
</reference>
<reference key="6">
    <citation type="journal article" date="2015" name="Nucleus">
        <title>Plant nuclear shape is independently determined by the SUN-WIP-WIT2-myosin XI-i complex and CRWN1.</title>
        <authorList>
            <person name="Zhou X."/>
            <person name="Groves N.R."/>
            <person name="Meier I."/>
        </authorList>
    </citation>
    <scope>FUNCTION</scope>
    <scope>INTERACTION WITH WIP1; WIP2; WIP3 AND KAKU1</scope>
    <scope>SUBUNIT</scope>
</reference>
<proteinExistence type="evidence at protein level"/>
<evidence type="ECO:0000250" key="1"/>
<evidence type="ECO:0000255" key="2"/>
<evidence type="ECO:0000256" key="3">
    <source>
        <dbReference type="SAM" id="MobiDB-lite"/>
    </source>
</evidence>
<evidence type="ECO:0000269" key="4">
    <source>
    </source>
</evidence>
<evidence type="ECO:0000269" key="5">
    <source>
    </source>
</evidence>
<evidence type="ECO:0000269" key="6">
    <source>
    </source>
</evidence>
<evidence type="ECO:0000305" key="7"/>
<organism>
    <name type="scientific">Arabidopsis thaliana</name>
    <name type="common">Mouse-ear cress</name>
    <dbReference type="NCBI Taxonomy" id="3702"/>
    <lineage>
        <taxon>Eukaryota</taxon>
        <taxon>Viridiplantae</taxon>
        <taxon>Streptophyta</taxon>
        <taxon>Embryophyta</taxon>
        <taxon>Tracheophyta</taxon>
        <taxon>Spermatophyta</taxon>
        <taxon>Magnoliopsida</taxon>
        <taxon>eudicotyledons</taxon>
        <taxon>Gunneridae</taxon>
        <taxon>Pentapetalae</taxon>
        <taxon>rosids</taxon>
        <taxon>malvids</taxon>
        <taxon>Brassicales</taxon>
        <taxon>Brassicaceae</taxon>
        <taxon>Camelineae</taxon>
        <taxon>Arabidopsis</taxon>
    </lineage>
</organism>
<name>WIT2_ARATH</name>
<keyword id="KW-0025">Alternative splicing</keyword>
<keyword id="KW-0175">Coiled coil</keyword>
<keyword id="KW-0903">Direct protein sequencing</keyword>
<keyword id="KW-0472">Membrane</keyword>
<keyword id="KW-1185">Reference proteome</keyword>
<keyword id="KW-0812">Transmembrane</keyword>
<keyword id="KW-1133">Transmembrane helix</keyword>